<gene>
    <name evidence="1" type="primary">rpmH</name>
    <name type="ordered locus">XfasM23_2226</name>
</gene>
<reference key="1">
    <citation type="journal article" date="2010" name="J. Bacteriol.">
        <title>Whole genome sequences of two Xylella fastidiosa strains (M12 and M23) causing almond leaf scorch disease in California.</title>
        <authorList>
            <person name="Chen J."/>
            <person name="Xie G."/>
            <person name="Han S."/>
            <person name="Chertkov O."/>
            <person name="Sims D."/>
            <person name="Civerolo E.L."/>
        </authorList>
    </citation>
    <scope>NUCLEOTIDE SEQUENCE [LARGE SCALE GENOMIC DNA]</scope>
    <source>
        <strain>M23</strain>
    </source>
</reference>
<protein>
    <recommendedName>
        <fullName evidence="1">Large ribosomal subunit protein bL34</fullName>
    </recommendedName>
    <alternativeName>
        <fullName evidence="3">50S ribosomal protein L34</fullName>
    </alternativeName>
</protein>
<organism>
    <name type="scientific">Xylella fastidiosa (strain M23)</name>
    <dbReference type="NCBI Taxonomy" id="405441"/>
    <lineage>
        <taxon>Bacteria</taxon>
        <taxon>Pseudomonadati</taxon>
        <taxon>Pseudomonadota</taxon>
        <taxon>Gammaproteobacteria</taxon>
        <taxon>Lysobacterales</taxon>
        <taxon>Lysobacteraceae</taxon>
        <taxon>Xylella</taxon>
    </lineage>
</organism>
<comment type="similarity">
    <text evidence="1">Belongs to the bacterial ribosomal protein bL34 family.</text>
</comment>
<feature type="chain" id="PRO_1000196147" description="Large ribosomal subunit protein bL34">
    <location>
        <begin position="1"/>
        <end position="46"/>
    </location>
</feature>
<feature type="region of interest" description="Disordered" evidence="2">
    <location>
        <begin position="1"/>
        <end position="46"/>
    </location>
</feature>
<feature type="compositionally biased region" description="Polar residues" evidence="2">
    <location>
        <begin position="1"/>
        <end position="11"/>
    </location>
</feature>
<feature type="compositionally biased region" description="Basic residues" evidence="2">
    <location>
        <begin position="32"/>
        <end position="46"/>
    </location>
</feature>
<proteinExistence type="inferred from homology"/>
<sequence>MATKRTYQPSNLKRKRDHGFRARMSTADGRKILARRRAKGRKRLSA</sequence>
<name>RL34_XYLF2</name>
<accession>B2IAR9</accession>
<evidence type="ECO:0000255" key="1">
    <source>
        <dbReference type="HAMAP-Rule" id="MF_00391"/>
    </source>
</evidence>
<evidence type="ECO:0000256" key="2">
    <source>
        <dbReference type="SAM" id="MobiDB-lite"/>
    </source>
</evidence>
<evidence type="ECO:0000305" key="3"/>
<dbReference type="EMBL" id="CP001011">
    <property type="protein sequence ID" value="ACB93619.1"/>
    <property type="molecule type" value="Genomic_DNA"/>
</dbReference>
<dbReference type="RefSeq" id="WP_004085093.1">
    <property type="nucleotide sequence ID" value="NC_010577.1"/>
</dbReference>
<dbReference type="SMR" id="B2IAR9"/>
<dbReference type="GeneID" id="93905998"/>
<dbReference type="KEGG" id="xfn:XfasM23_2226"/>
<dbReference type="HOGENOM" id="CLU_129938_2_0_6"/>
<dbReference type="Proteomes" id="UP000001698">
    <property type="component" value="Chromosome"/>
</dbReference>
<dbReference type="GO" id="GO:1990904">
    <property type="term" value="C:ribonucleoprotein complex"/>
    <property type="evidence" value="ECO:0007669"/>
    <property type="project" value="UniProtKB-KW"/>
</dbReference>
<dbReference type="GO" id="GO:0005840">
    <property type="term" value="C:ribosome"/>
    <property type="evidence" value="ECO:0007669"/>
    <property type="project" value="UniProtKB-KW"/>
</dbReference>
<dbReference type="GO" id="GO:0003735">
    <property type="term" value="F:structural constituent of ribosome"/>
    <property type="evidence" value="ECO:0007669"/>
    <property type="project" value="InterPro"/>
</dbReference>
<dbReference type="GO" id="GO:0006412">
    <property type="term" value="P:translation"/>
    <property type="evidence" value="ECO:0007669"/>
    <property type="project" value="UniProtKB-UniRule"/>
</dbReference>
<dbReference type="FunFam" id="1.10.287.3980:FF:000001">
    <property type="entry name" value="Mitochondrial ribosomal protein L34"/>
    <property type="match status" value="1"/>
</dbReference>
<dbReference type="Gene3D" id="1.10.287.3980">
    <property type="match status" value="1"/>
</dbReference>
<dbReference type="HAMAP" id="MF_00391">
    <property type="entry name" value="Ribosomal_bL34"/>
    <property type="match status" value="1"/>
</dbReference>
<dbReference type="InterPro" id="IPR000271">
    <property type="entry name" value="Ribosomal_bL34"/>
</dbReference>
<dbReference type="InterPro" id="IPR020939">
    <property type="entry name" value="Ribosomal_bL34_CS"/>
</dbReference>
<dbReference type="NCBIfam" id="TIGR01030">
    <property type="entry name" value="rpmH_bact"/>
    <property type="match status" value="1"/>
</dbReference>
<dbReference type="PANTHER" id="PTHR14503:SF4">
    <property type="entry name" value="LARGE RIBOSOMAL SUBUNIT PROTEIN BL34M"/>
    <property type="match status" value="1"/>
</dbReference>
<dbReference type="PANTHER" id="PTHR14503">
    <property type="entry name" value="MITOCHONDRIAL RIBOSOMAL PROTEIN 34 FAMILY MEMBER"/>
    <property type="match status" value="1"/>
</dbReference>
<dbReference type="Pfam" id="PF00468">
    <property type="entry name" value="Ribosomal_L34"/>
    <property type="match status" value="1"/>
</dbReference>
<dbReference type="PROSITE" id="PS00784">
    <property type="entry name" value="RIBOSOMAL_L34"/>
    <property type="match status" value="1"/>
</dbReference>
<keyword id="KW-0687">Ribonucleoprotein</keyword>
<keyword id="KW-0689">Ribosomal protein</keyword>